<dbReference type="EMBL" id="CP000020">
    <property type="protein sequence ID" value="AAW84743.1"/>
    <property type="molecule type" value="Genomic_DNA"/>
</dbReference>
<dbReference type="RefSeq" id="WP_005417243.1">
    <property type="nucleotide sequence ID" value="NZ_CAWLES010000001.1"/>
</dbReference>
<dbReference type="RefSeq" id="YP_203631.1">
    <property type="nucleotide sequence ID" value="NC_006840.2"/>
</dbReference>
<dbReference type="SMR" id="Q5E8A3"/>
<dbReference type="STRING" id="312309.VF_0248"/>
<dbReference type="EnsemblBacteria" id="AAW84743">
    <property type="protein sequence ID" value="AAW84743"/>
    <property type="gene ID" value="VF_0248"/>
</dbReference>
<dbReference type="GeneID" id="54162869"/>
<dbReference type="KEGG" id="vfi:VF_0248"/>
<dbReference type="PATRIC" id="fig|312309.11.peg.243"/>
<dbReference type="eggNOG" id="COG0198">
    <property type="taxonomic scope" value="Bacteria"/>
</dbReference>
<dbReference type="HOGENOM" id="CLU_093315_2_2_6"/>
<dbReference type="OrthoDB" id="9807419at2"/>
<dbReference type="Proteomes" id="UP000000537">
    <property type="component" value="Chromosome I"/>
</dbReference>
<dbReference type="GO" id="GO:1990904">
    <property type="term" value="C:ribonucleoprotein complex"/>
    <property type="evidence" value="ECO:0007669"/>
    <property type="project" value="UniProtKB-KW"/>
</dbReference>
<dbReference type="GO" id="GO:0005840">
    <property type="term" value="C:ribosome"/>
    <property type="evidence" value="ECO:0007669"/>
    <property type="project" value="UniProtKB-KW"/>
</dbReference>
<dbReference type="GO" id="GO:0019843">
    <property type="term" value="F:rRNA binding"/>
    <property type="evidence" value="ECO:0007669"/>
    <property type="project" value="UniProtKB-UniRule"/>
</dbReference>
<dbReference type="GO" id="GO:0003735">
    <property type="term" value="F:structural constituent of ribosome"/>
    <property type="evidence" value="ECO:0007669"/>
    <property type="project" value="InterPro"/>
</dbReference>
<dbReference type="GO" id="GO:0006412">
    <property type="term" value="P:translation"/>
    <property type="evidence" value="ECO:0007669"/>
    <property type="project" value="UniProtKB-UniRule"/>
</dbReference>
<dbReference type="CDD" id="cd06089">
    <property type="entry name" value="KOW_RPL26"/>
    <property type="match status" value="1"/>
</dbReference>
<dbReference type="FunFam" id="2.30.30.30:FF:000004">
    <property type="entry name" value="50S ribosomal protein L24"/>
    <property type="match status" value="1"/>
</dbReference>
<dbReference type="Gene3D" id="2.30.30.30">
    <property type="match status" value="1"/>
</dbReference>
<dbReference type="HAMAP" id="MF_01326_B">
    <property type="entry name" value="Ribosomal_uL24_B"/>
    <property type="match status" value="1"/>
</dbReference>
<dbReference type="InterPro" id="IPR005824">
    <property type="entry name" value="KOW"/>
</dbReference>
<dbReference type="InterPro" id="IPR014722">
    <property type="entry name" value="Rib_uL2_dom2"/>
</dbReference>
<dbReference type="InterPro" id="IPR003256">
    <property type="entry name" value="Ribosomal_uL24"/>
</dbReference>
<dbReference type="InterPro" id="IPR005825">
    <property type="entry name" value="Ribosomal_uL24_CS"/>
</dbReference>
<dbReference type="InterPro" id="IPR041988">
    <property type="entry name" value="Ribosomal_uL24_KOW"/>
</dbReference>
<dbReference type="InterPro" id="IPR008991">
    <property type="entry name" value="Translation_prot_SH3-like_sf"/>
</dbReference>
<dbReference type="NCBIfam" id="TIGR01079">
    <property type="entry name" value="rplX_bact"/>
    <property type="match status" value="1"/>
</dbReference>
<dbReference type="PANTHER" id="PTHR12903">
    <property type="entry name" value="MITOCHONDRIAL RIBOSOMAL PROTEIN L24"/>
    <property type="match status" value="1"/>
</dbReference>
<dbReference type="Pfam" id="PF00467">
    <property type="entry name" value="KOW"/>
    <property type="match status" value="1"/>
</dbReference>
<dbReference type="Pfam" id="PF17136">
    <property type="entry name" value="ribosomal_L24"/>
    <property type="match status" value="1"/>
</dbReference>
<dbReference type="SMART" id="SM00739">
    <property type="entry name" value="KOW"/>
    <property type="match status" value="1"/>
</dbReference>
<dbReference type="SUPFAM" id="SSF50104">
    <property type="entry name" value="Translation proteins SH3-like domain"/>
    <property type="match status" value="1"/>
</dbReference>
<dbReference type="PROSITE" id="PS01108">
    <property type="entry name" value="RIBOSOMAL_L24"/>
    <property type="match status" value="1"/>
</dbReference>
<organism>
    <name type="scientific">Aliivibrio fischeri (strain ATCC 700601 / ES114)</name>
    <name type="common">Vibrio fischeri</name>
    <dbReference type="NCBI Taxonomy" id="312309"/>
    <lineage>
        <taxon>Bacteria</taxon>
        <taxon>Pseudomonadati</taxon>
        <taxon>Pseudomonadota</taxon>
        <taxon>Gammaproteobacteria</taxon>
        <taxon>Vibrionales</taxon>
        <taxon>Vibrionaceae</taxon>
        <taxon>Aliivibrio</taxon>
    </lineage>
</organism>
<comment type="function">
    <text evidence="1">One of two assembly initiator proteins, it binds directly to the 5'-end of the 23S rRNA, where it nucleates assembly of the 50S subunit.</text>
</comment>
<comment type="function">
    <text evidence="1">One of the proteins that surrounds the polypeptide exit tunnel on the outside of the subunit.</text>
</comment>
<comment type="subunit">
    <text evidence="1">Part of the 50S ribosomal subunit.</text>
</comment>
<comment type="similarity">
    <text evidence="1">Belongs to the universal ribosomal protein uL24 family.</text>
</comment>
<protein>
    <recommendedName>
        <fullName evidence="1">Large ribosomal subunit protein uL24</fullName>
    </recommendedName>
    <alternativeName>
        <fullName evidence="2">50S ribosomal protein L24</fullName>
    </alternativeName>
</protein>
<evidence type="ECO:0000255" key="1">
    <source>
        <dbReference type="HAMAP-Rule" id="MF_01326"/>
    </source>
</evidence>
<evidence type="ECO:0000305" key="2"/>
<gene>
    <name evidence="1" type="primary">rplX</name>
    <name type="ordered locus">VF_0248</name>
</gene>
<reference key="1">
    <citation type="journal article" date="2005" name="Proc. Natl. Acad. Sci. U.S.A.">
        <title>Complete genome sequence of Vibrio fischeri: a symbiotic bacterium with pathogenic congeners.</title>
        <authorList>
            <person name="Ruby E.G."/>
            <person name="Urbanowski M."/>
            <person name="Campbell J."/>
            <person name="Dunn A."/>
            <person name="Faini M."/>
            <person name="Gunsalus R."/>
            <person name="Lostroh P."/>
            <person name="Lupp C."/>
            <person name="McCann J."/>
            <person name="Millikan D."/>
            <person name="Schaefer A."/>
            <person name="Stabb E."/>
            <person name="Stevens A."/>
            <person name="Visick K."/>
            <person name="Whistler C."/>
            <person name="Greenberg E.P."/>
        </authorList>
    </citation>
    <scope>NUCLEOTIDE SEQUENCE [LARGE SCALE GENOMIC DNA]</scope>
    <source>
        <strain>ATCC 700601 / ES114</strain>
    </source>
</reference>
<keyword id="KW-1185">Reference proteome</keyword>
<keyword id="KW-0687">Ribonucleoprotein</keyword>
<keyword id="KW-0689">Ribosomal protein</keyword>
<keyword id="KW-0694">RNA-binding</keyword>
<keyword id="KW-0699">rRNA-binding</keyword>
<sequence>MAAKIRRNDEVIVLVGKDKGKKGKVTKVLETGKVIVEGINLVKKHQKPVPALGQQGGIVEKEAAIDASNIAIYNEATGKADRIGFRFEEGKKVRFFKSNGETIK</sequence>
<name>RL24_ALIF1</name>
<proteinExistence type="inferred from homology"/>
<feature type="chain" id="PRO_0000241684" description="Large ribosomal subunit protein uL24">
    <location>
        <begin position="1"/>
        <end position="104"/>
    </location>
</feature>
<accession>Q5E8A3</accession>